<name>RDSA_ECOLI</name>
<gene>
    <name evidence="3" type="primary">rdsA</name>
    <name evidence="4" type="synonym">yhiN</name>
    <name type="ordered locus">b3492</name>
    <name type="ordered locus">JW3459</name>
</gene>
<organism>
    <name type="scientific">Escherichia coli (strain K12)</name>
    <dbReference type="NCBI Taxonomy" id="83333"/>
    <lineage>
        <taxon>Bacteria</taxon>
        <taxon>Pseudomonadati</taxon>
        <taxon>Pseudomonadota</taxon>
        <taxon>Gammaproteobacteria</taxon>
        <taxon>Enterobacterales</taxon>
        <taxon>Enterobacteriaceae</taxon>
        <taxon>Escherichia</taxon>
    </lineage>
</organism>
<evidence type="ECO:0000250" key="1">
    <source>
        <dbReference type="UniProtKB" id="P44941"/>
    </source>
</evidence>
<evidence type="ECO:0000269" key="2">
    <source>
    </source>
</evidence>
<evidence type="ECO:0000303" key="3">
    <source>
    </source>
</evidence>
<evidence type="ECO:0000303" key="4">
    <source>
    </source>
</evidence>
<evidence type="ECO:0000305" key="5"/>
<proteinExistence type="evidence at protein level"/>
<sequence>MERFDAIIIGAGAAGMFCSALAGQAGRRVLLIDNGKKPGRKILMSGGGRCNFTNLYVEPGAYLSQNPHFCKSALARFTQWDFIDLVNKHGIAWHEKTLGQLFCDDSAQQIVDMLVDECEKGNVTFRLRSEVLSVAKDETGFTLDLNGMTVGCEKLVIATGGLSMPGLGASPFGYKIAEQFGLNVLPTRAGLVPFTLHKPLLEELQVLAGVAVPSVITAENGTVFRENLLFTHRGLSGPAVLQISSYWQPGEFVSINLLPDVDLETFLNEQRNAHPNQSLKNTLAVHLPKRLVERLQQLGQIPDVSLKQLNVRDQQALISTLTDWRVQPNGTEGYRTAEVTLGGVDTNELSSRTMEARKVPGLYFIGEVMDVTGWLGGYNFQWAWSSAWACAQDLIAAKSS</sequence>
<accession>P37631</accession>
<accession>P76705</accession>
<accession>Q2M7F4</accession>
<feature type="chain" id="PRO_0000169565" description="Ribosomal RNA dihydrouridine synthase">
    <location>
        <begin position="1"/>
        <end position="400"/>
    </location>
</feature>
<feature type="binding site" evidence="1">
    <location>
        <position position="14"/>
    </location>
    <ligand>
        <name>FAD</name>
        <dbReference type="ChEBI" id="CHEBI:57692"/>
    </ligand>
</feature>
<feature type="binding site" evidence="1">
    <location>
        <position position="33"/>
    </location>
    <ligand>
        <name>FAD</name>
        <dbReference type="ChEBI" id="CHEBI:57692"/>
    </ligand>
</feature>
<feature type="binding site" evidence="1">
    <location>
        <position position="34"/>
    </location>
    <ligand>
        <name>FAD</name>
        <dbReference type="ChEBI" id="CHEBI:57692"/>
    </ligand>
</feature>
<feature type="binding site" evidence="1">
    <location>
        <position position="40"/>
    </location>
    <ligand>
        <name>FAD</name>
        <dbReference type="ChEBI" id="CHEBI:57692"/>
    </ligand>
</feature>
<feature type="binding site" evidence="1">
    <location>
        <position position="46"/>
    </location>
    <ligand>
        <name>FAD</name>
        <dbReference type="ChEBI" id="CHEBI:57692"/>
    </ligand>
</feature>
<feature type="binding site" evidence="1">
    <location>
        <position position="51"/>
    </location>
    <ligand>
        <name>FAD</name>
        <dbReference type="ChEBI" id="CHEBI:57692"/>
    </ligand>
</feature>
<feature type="binding site" evidence="1">
    <location>
        <position position="131"/>
    </location>
    <ligand>
        <name>FAD</name>
        <dbReference type="ChEBI" id="CHEBI:57692"/>
    </ligand>
</feature>
<feature type="binding site" evidence="1">
    <location>
        <position position="367"/>
    </location>
    <ligand>
        <name>FAD</name>
        <dbReference type="ChEBI" id="CHEBI:57692"/>
    </ligand>
</feature>
<feature type="binding site" evidence="1">
    <location>
        <position position="380"/>
    </location>
    <ligand>
        <name>FAD</name>
        <dbReference type="ChEBI" id="CHEBI:57692"/>
    </ligand>
</feature>
<comment type="function">
    <text evidence="2">Catalyzes the synthesis of 5,6-dihydrouridine (D) at position 2449 in 23S rRNA (PubMed:39078675). Can use NADH as a source of reducing equivalents but not NADPH (PubMed:39078675).</text>
</comment>
<comment type="catalytic activity">
    <reaction evidence="2">
        <text>a 5,6-dihydrouridine in mRNA + NAD(+) = a uridine in mRNA + NADH + H(+)</text>
        <dbReference type="Rhea" id="RHEA:69851"/>
        <dbReference type="Rhea" id="RHEA-COMP:14658"/>
        <dbReference type="Rhea" id="RHEA-COMP:17789"/>
        <dbReference type="ChEBI" id="CHEBI:15378"/>
        <dbReference type="ChEBI" id="CHEBI:57540"/>
        <dbReference type="ChEBI" id="CHEBI:57945"/>
        <dbReference type="ChEBI" id="CHEBI:65315"/>
        <dbReference type="ChEBI" id="CHEBI:74443"/>
    </reaction>
    <physiologicalReaction direction="right-to-left" evidence="2">
        <dbReference type="Rhea" id="RHEA:69853"/>
    </physiologicalReaction>
</comment>
<comment type="cofactor">
    <cofactor evidence="2">
        <name>FAD</name>
        <dbReference type="ChEBI" id="CHEBI:57692"/>
    </cofactor>
</comment>
<comment type="biophysicochemical properties">
    <kinetics>
        <KM evidence="2">6.5 uM for NADH</KM>
        <text evidence="2">kcat is 0.027 sec(-1) with NADH as substrate.</text>
    </kinetics>
</comment>
<comment type="disruption phenotype">
    <text evidence="2">The rRNA from the deletion mutant lacks dihydrouridine at position 2449.</text>
</comment>
<comment type="similarity">
    <text evidence="5">Belongs to the BaiN/RdsA family. RdsA subfamily.</text>
</comment>
<dbReference type="EC" id="1.3.1.-" evidence="2"/>
<dbReference type="EMBL" id="U00039">
    <property type="protein sequence ID" value="AAB18468.2"/>
    <property type="molecule type" value="Genomic_DNA"/>
</dbReference>
<dbReference type="EMBL" id="U00096">
    <property type="protein sequence ID" value="AAC76517.1"/>
    <property type="molecule type" value="Genomic_DNA"/>
</dbReference>
<dbReference type="EMBL" id="AP009048">
    <property type="protein sequence ID" value="BAE77802.1"/>
    <property type="molecule type" value="Genomic_DNA"/>
</dbReference>
<dbReference type="PIR" id="G65146">
    <property type="entry name" value="G65146"/>
</dbReference>
<dbReference type="RefSeq" id="NP_417949.1">
    <property type="nucleotide sequence ID" value="NC_000913.3"/>
</dbReference>
<dbReference type="RefSeq" id="WP_000439170.1">
    <property type="nucleotide sequence ID" value="NZ_SSZK01000042.1"/>
</dbReference>
<dbReference type="SMR" id="P37631"/>
<dbReference type="BioGRID" id="4262096">
    <property type="interactions" value="20"/>
</dbReference>
<dbReference type="BioGRID" id="852305">
    <property type="interactions" value="3"/>
</dbReference>
<dbReference type="DIP" id="DIP-12368N"/>
<dbReference type="FunCoup" id="P37631">
    <property type="interactions" value="509"/>
</dbReference>
<dbReference type="IntAct" id="P37631">
    <property type="interactions" value="11"/>
</dbReference>
<dbReference type="STRING" id="511145.b3492"/>
<dbReference type="jPOST" id="P37631"/>
<dbReference type="PaxDb" id="511145-b3492"/>
<dbReference type="EnsemblBacteria" id="AAC76517">
    <property type="protein sequence ID" value="AAC76517"/>
    <property type="gene ID" value="b3492"/>
</dbReference>
<dbReference type="GeneID" id="947996"/>
<dbReference type="KEGG" id="ecj:JW3459"/>
<dbReference type="KEGG" id="eco:b3492"/>
<dbReference type="KEGG" id="ecoc:C3026_18915"/>
<dbReference type="PATRIC" id="fig|1411691.4.peg.3230"/>
<dbReference type="EchoBASE" id="EB2141"/>
<dbReference type="eggNOG" id="COG2081">
    <property type="taxonomic scope" value="Bacteria"/>
</dbReference>
<dbReference type="HOGENOM" id="CLU_025174_2_0_6"/>
<dbReference type="InParanoid" id="P37631"/>
<dbReference type="OMA" id="RCNFTNM"/>
<dbReference type="OrthoDB" id="9773233at2"/>
<dbReference type="PhylomeDB" id="P37631"/>
<dbReference type="BioCyc" id="EcoCyc:EG12229-MONOMER"/>
<dbReference type="PRO" id="PR:P37631"/>
<dbReference type="Proteomes" id="UP000000625">
    <property type="component" value="Chromosome"/>
</dbReference>
<dbReference type="GO" id="GO:0005829">
    <property type="term" value="C:cytosol"/>
    <property type="evidence" value="ECO:0000314"/>
    <property type="project" value="EcoCyc"/>
</dbReference>
<dbReference type="Gene3D" id="3.50.50.60">
    <property type="entry name" value="FAD/NAD(P)-binding domain"/>
    <property type="match status" value="1"/>
</dbReference>
<dbReference type="Gene3D" id="1.10.8.260">
    <property type="entry name" value="HI0933 insert domain-like"/>
    <property type="match status" value="1"/>
</dbReference>
<dbReference type="Gene3D" id="2.40.30.10">
    <property type="entry name" value="Translation factors"/>
    <property type="match status" value="1"/>
</dbReference>
<dbReference type="InterPro" id="IPR004792">
    <property type="entry name" value="BaiN-like"/>
</dbReference>
<dbReference type="InterPro" id="IPR055178">
    <property type="entry name" value="BaiN-like_dom"/>
</dbReference>
<dbReference type="InterPro" id="IPR023166">
    <property type="entry name" value="BaiN-like_dom_sf"/>
</dbReference>
<dbReference type="InterPro" id="IPR036188">
    <property type="entry name" value="FAD/NAD-bd_sf"/>
</dbReference>
<dbReference type="NCBIfam" id="TIGR00275">
    <property type="entry name" value="aminoacetone oxidase family FAD-binding enzyme"/>
    <property type="match status" value="1"/>
</dbReference>
<dbReference type="PANTHER" id="PTHR42887">
    <property type="entry name" value="OS12G0638800 PROTEIN"/>
    <property type="match status" value="1"/>
</dbReference>
<dbReference type="PANTHER" id="PTHR42887:SF2">
    <property type="entry name" value="OS12G0638800 PROTEIN"/>
    <property type="match status" value="1"/>
</dbReference>
<dbReference type="Pfam" id="PF03486">
    <property type="entry name" value="HI0933_like"/>
    <property type="match status" value="1"/>
</dbReference>
<dbReference type="Pfam" id="PF22780">
    <property type="entry name" value="HI0933_like_1st"/>
    <property type="match status" value="1"/>
</dbReference>
<dbReference type="PRINTS" id="PR00368">
    <property type="entry name" value="FADPNR"/>
</dbReference>
<dbReference type="PRINTS" id="PR00411">
    <property type="entry name" value="PNDRDTASEI"/>
</dbReference>
<dbReference type="SUPFAM" id="SSF51905">
    <property type="entry name" value="FAD/NAD(P)-binding domain"/>
    <property type="match status" value="1"/>
</dbReference>
<dbReference type="SUPFAM" id="SSF160996">
    <property type="entry name" value="HI0933 insert domain-like"/>
    <property type="match status" value="1"/>
</dbReference>
<keyword id="KW-0274">FAD</keyword>
<keyword id="KW-0285">Flavoprotein</keyword>
<keyword id="KW-0520">NAD</keyword>
<keyword id="KW-0560">Oxidoreductase</keyword>
<keyword id="KW-1185">Reference proteome</keyword>
<keyword id="KW-0698">rRNA processing</keyword>
<reference key="1">
    <citation type="journal article" date="1994" name="Nucleic Acids Res.">
        <title>Analysis of the Escherichia coli genome. V. DNA sequence of the region from 76.0 to 81.5 minutes.</title>
        <authorList>
            <person name="Sofia H.J."/>
            <person name="Burland V."/>
            <person name="Daniels D.L."/>
            <person name="Plunkett G. III"/>
            <person name="Blattner F.R."/>
        </authorList>
    </citation>
    <scope>NUCLEOTIDE SEQUENCE [LARGE SCALE GENOMIC DNA]</scope>
    <source>
        <strain>K12 / MG1655 / ATCC 47076</strain>
    </source>
</reference>
<reference key="2">
    <citation type="journal article" date="1997" name="Science">
        <title>The complete genome sequence of Escherichia coli K-12.</title>
        <authorList>
            <person name="Blattner F.R."/>
            <person name="Plunkett G. III"/>
            <person name="Bloch C.A."/>
            <person name="Perna N.T."/>
            <person name="Burland V."/>
            <person name="Riley M."/>
            <person name="Collado-Vides J."/>
            <person name="Glasner J.D."/>
            <person name="Rode C.K."/>
            <person name="Mayhew G.F."/>
            <person name="Gregor J."/>
            <person name="Davis N.W."/>
            <person name="Kirkpatrick H.A."/>
            <person name="Goeden M.A."/>
            <person name="Rose D.J."/>
            <person name="Mau B."/>
            <person name="Shao Y."/>
        </authorList>
    </citation>
    <scope>NUCLEOTIDE SEQUENCE [LARGE SCALE GENOMIC DNA]</scope>
    <source>
        <strain>K12 / MG1655 / ATCC 47076</strain>
    </source>
</reference>
<reference key="3">
    <citation type="journal article" date="2006" name="Mol. Syst. Biol.">
        <title>Highly accurate genome sequences of Escherichia coli K-12 strains MG1655 and W3110.</title>
        <authorList>
            <person name="Hayashi K."/>
            <person name="Morooka N."/>
            <person name="Yamamoto Y."/>
            <person name="Fujita K."/>
            <person name="Isono K."/>
            <person name="Choi S."/>
            <person name="Ohtsubo E."/>
            <person name="Baba T."/>
            <person name="Wanner B.L."/>
            <person name="Mori H."/>
            <person name="Horiuchi T."/>
        </authorList>
    </citation>
    <scope>NUCLEOTIDE SEQUENCE [LARGE SCALE GENOMIC DNA]</scope>
    <source>
        <strain>K12 / W3110 / ATCC 27325 / DSM 5911</strain>
    </source>
</reference>
<reference key="4">
    <citation type="journal article" date="2024" name="Proc. Natl. Acad. Sci. U.S.A.">
        <title>Exploring a unique class of flavoenzymes: Identification and biochemical characterization of ribosomal RNA dihydrouridine synthase.</title>
        <authorList>
            <person name="Toubdji S."/>
            <person name="Thuillier Q."/>
            <person name="Kilz L.M."/>
            <person name="Marchand V."/>
            <person name="Yuan Y."/>
            <person name="Sudol C."/>
            <person name="Goyenvalle C."/>
            <person name="Jean-Jean O."/>
            <person name="Rose S."/>
            <person name="Douthwaite S."/>
            <person name="Hardy L."/>
            <person name="Baharoglu Z."/>
            <person name="de Crecy-Lagard V."/>
            <person name="Helm M."/>
            <person name="Motorin Y."/>
            <person name="Hamdane D."/>
            <person name="Bregeon D."/>
        </authorList>
    </citation>
    <scope>FUNCTION</scope>
    <scope>CATALYTIC ACTIVITY</scope>
    <scope>COFACTOR</scope>
    <scope>BIOPHYSICOCHEMICAL PROPERTIES</scope>
    <scope>DISRUPTION PHENOTYPE</scope>
    <source>
        <strain>K12 / BW25113</strain>
    </source>
</reference>
<reference key="5">
    <citation type="journal article" date="2025" name="Proc. Natl. Acad. Sci. U.S.A.">
        <authorList>
            <person name="Toubdji S."/>
            <person name="Thuillier Q."/>
            <person name="Kilz L.M."/>
            <person name="Marchand V."/>
            <person name="Yuan Y."/>
            <person name="Sudol C."/>
            <person name="Goyenvalle C."/>
            <person name="Jean-Jean O."/>
            <person name="Rose S."/>
            <person name="Douthwaite S."/>
            <person name="Hardy L."/>
            <person name="Baharoglu Z."/>
            <person name="de Crecy-Lagard V."/>
            <person name="Helm M."/>
            <person name="Motorin Y."/>
            <person name="Hamdane D."/>
            <person name="Bregeon D."/>
        </authorList>
    </citation>
    <scope>ERRATUM OF PUBMED:39078675</scope>
</reference>
<protein>
    <recommendedName>
        <fullName evidence="3">Ribosomal RNA dihydrouridine synthase</fullName>
        <shortName evidence="5">rRNA dihydrouridine synthase</shortName>
        <ecNumber evidence="2">1.3.1.-</ecNumber>
    </recommendedName>
    <alternativeName>
        <fullName evidence="3">Ribosomal dihydrouridine synthase A</fullName>
    </alternativeName>
</protein>